<organism>
    <name type="scientific">Methylobacterium sp. (strain 4-46)</name>
    <dbReference type="NCBI Taxonomy" id="426117"/>
    <lineage>
        <taxon>Bacteria</taxon>
        <taxon>Pseudomonadati</taxon>
        <taxon>Pseudomonadota</taxon>
        <taxon>Alphaproteobacteria</taxon>
        <taxon>Hyphomicrobiales</taxon>
        <taxon>Methylobacteriaceae</taxon>
        <taxon>Methylobacterium</taxon>
    </lineage>
</organism>
<reference key="1">
    <citation type="submission" date="2008-02" db="EMBL/GenBank/DDBJ databases">
        <title>Complete sequence of chromosome of Methylobacterium sp. 4-46.</title>
        <authorList>
            <consortium name="US DOE Joint Genome Institute"/>
            <person name="Copeland A."/>
            <person name="Lucas S."/>
            <person name="Lapidus A."/>
            <person name="Glavina del Rio T."/>
            <person name="Dalin E."/>
            <person name="Tice H."/>
            <person name="Bruce D."/>
            <person name="Goodwin L."/>
            <person name="Pitluck S."/>
            <person name="Chertkov O."/>
            <person name="Brettin T."/>
            <person name="Detter J.C."/>
            <person name="Han C."/>
            <person name="Kuske C.R."/>
            <person name="Schmutz J."/>
            <person name="Larimer F."/>
            <person name="Land M."/>
            <person name="Hauser L."/>
            <person name="Kyrpides N."/>
            <person name="Ivanova N."/>
            <person name="Marx C.J."/>
            <person name="Richardson P."/>
        </authorList>
    </citation>
    <scope>NUCLEOTIDE SEQUENCE [LARGE SCALE GENOMIC DNA]</scope>
    <source>
        <strain>4-46</strain>
    </source>
</reference>
<sequence>MDKVPITIRGYAALEEELKHRQQVERPRIIQAIAEARALGDLSENAEYHAAKEAQSLNEGRVLELESLISRAEIIDVSKLSGTKVKFGATVQLIDEDTEEEKTYQIVGEPEADVRSGRVSITSPVARALIGKGVGDTVEVTTPGGGKSYEIVGIRYVG</sequence>
<evidence type="ECO:0000255" key="1">
    <source>
        <dbReference type="HAMAP-Rule" id="MF_00105"/>
    </source>
</evidence>
<protein>
    <recommendedName>
        <fullName evidence="1">Transcription elongation factor GreA</fullName>
    </recommendedName>
    <alternativeName>
        <fullName evidence="1">Transcript cleavage factor GreA</fullName>
    </alternativeName>
</protein>
<gene>
    <name evidence="1" type="primary">greA</name>
    <name type="ordered locus">M446_3400</name>
</gene>
<dbReference type="EMBL" id="CP000943">
    <property type="protein sequence ID" value="ACA17790.1"/>
    <property type="molecule type" value="Genomic_DNA"/>
</dbReference>
<dbReference type="RefSeq" id="WP_012333189.1">
    <property type="nucleotide sequence ID" value="NC_010511.1"/>
</dbReference>
<dbReference type="SMR" id="B0U8M0"/>
<dbReference type="STRING" id="426117.M446_3400"/>
<dbReference type="KEGG" id="met:M446_3400"/>
<dbReference type="eggNOG" id="COG0782">
    <property type="taxonomic scope" value="Bacteria"/>
</dbReference>
<dbReference type="HOGENOM" id="CLU_101379_2_0_5"/>
<dbReference type="GO" id="GO:0003677">
    <property type="term" value="F:DNA binding"/>
    <property type="evidence" value="ECO:0007669"/>
    <property type="project" value="UniProtKB-UniRule"/>
</dbReference>
<dbReference type="GO" id="GO:0070063">
    <property type="term" value="F:RNA polymerase binding"/>
    <property type="evidence" value="ECO:0007669"/>
    <property type="project" value="InterPro"/>
</dbReference>
<dbReference type="GO" id="GO:0006354">
    <property type="term" value="P:DNA-templated transcription elongation"/>
    <property type="evidence" value="ECO:0007669"/>
    <property type="project" value="TreeGrafter"/>
</dbReference>
<dbReference type="GO" id="GO:0032784">
    <property type="term" value="P:regulation of DNA-templated transcription elongation"/>
    <property type="evidence" value="ECO:0007669"/>
    <property type="project" value="UniProtKB-UniRule"/>
</dbReference>
<dbReference type="FunFam" id="1.10.287.180:FF:000001">
    <property type="entry name" value="Transcription elongation factor GreA"/>
    <property type="match status" value="1"/>
</dbReference>
<dbReference type="FunFam" id="3.10.50.30:FF:000001">
    <property type="entry name" value="Transcription elongation factor GreA"/>
    <property type="match status" value="1"/>
</dbReference>
<dbReference type="Gene3D" id="3.10.50.30">
    <property type="entry name" value="Transcription elongation factor, GreA/GreB, C-terminal domain"/>
    <property type="match status" value="1"/>
</dbReference>
<dbReference type="Gene3D" id="1.10.287.180">
    <property type="entry name" value="Transcription elongation factor, GreA/GreB, N-terminal domain"/>
    <property type="match status" value="1"/>
</dbReference>
<dbReference type="HAMAP" id="MF_00105">
    <property type="entry name" value="GreA_GreB"/>
    <property type="match status" value="1"/>
</dbReference>
<dbReference type="InterPro" id="IPR036953">
    <property type="entry name" value="GreA/GreB_C_sf"/>
</dbReference>
<dbReference type="InterPro" id="IPR018151">
    <property type="entry name" value="TF_GreA/GreB_CS"/>
</dbReference>
<dbReference type="InterPro" id="IPR006359">
    <property type="entry name" value="Tscrpt_elong_fac_GreA"/>
</dbReference>
<dbReference type="InterPro" id="IPR028624">
    <property type="entry name" value="Tscrpt_elong_fac_GreA/B"/>
</dbReference>
<dbReference type="InterPro" id="IPR001437">
    <property type="entry name" value="Tscrpt_elong_fac_GreA/B_C"/>
</dbReference>
<dbReference type="InterPro" id="IPR023459">
    <property type="entry name" value="Tscrpt_elong_fac_GreA/B_fam"/>
</dbReference>
<dbReference type="InterPro" id="IPR022691">
    <property type="entry name" value="Tscrpt_elong_fac_GreA/B_N"/>
</dbReference>
<dbReference type="InterPro" id="IPR036805">
    <property type="entry name" value="Tscrpt_elong_fac_GreA/B_N_sf"/>
</dbReference>
<dbReference type="NCBIfam" id="TIGR01462">
    <property type="entry name" value="greA"/>
    <property type="match status" value="1"/>
</dbReference>
<dbReference type="NCBIfam" id="NF001261">
    <property type="entry name" value="PRK00226.1-2"/>
    <property type="match status" value="1"/>
</dbReference>
<dbReference type="NCBIfam" id="NF001263">
    <property type="entry name" value="PRK00226.1-4"/>
    <property type="match status" value="1"/>
</dbReference>
<dbReference type="NCBIfam" id="NF001264">
    <property type="entry name" value="PRK00226.1-5"/>
    <property type="match status" value="1"/>
</dbReference>
<dbReference type="PANTHER" id="PTHR30437">
    <property type="entry name" value="TRANSCRIPTION ELONGATION FACTOR GREA"/>
    <property type="match status" value="1"/>
</dbReference>
<dbReference type="PANTHER" id="PTHR30437:SF4">
    <property type="entry name" value="TRANSCRIPTION ELONGATION FACTOR GREA"/>
    <property type="match status" value="1"/>
</dbReference>
<dbReference type="Pfam" id="PF01272">
    <property type="entry name" value="GreA_GreB"/>
    <property type="match status" value="1"/>
</dbReference>
<dbReference type="Pfam" id="PF03449">
    <property type="entry name" value="GreA_GreB_N"/>
    <property type="match status" value="1"/>
</dbReference>
<dbReference type="PIRSF" id="PIRSF006092">
    <property type="entry name" value="GreA_GreB"/>
    <property type="match status" value="1"/>
</dbReference>
<dbReference type="SUPFAM" id="SSF54534">
    <property type="entry name" value="FKBP-like"/>
    <property type="match status" value="1"/>
</dbReference>
<dbReference type="SUPFAM" id="SSF46557">
    <property type="entry name" value="GreA transcript cleavage protein, N-terminal domain"/>
    <property type="match status" value="1"/>
</dbReference>
<dbReference type="PROSITE" id="PS00829">
    <property type="entry name" value="GREAB_1"/>
    <property type="match status" value="1"/>
</dbReference>
<dbReference type="PROSITE" id="PS00830">
    <property type="entry name" value="GREAB_2"/>
    <property type="match status" value="1"/>
</dbReference>
<accession>B0U8M0</accession>
<keyword id="KW-0238">DNA-binding</keyword>
<keyword id="KW-0804">Transcription</keyword>
<keyword id="KW-0805">Transcription regulation</keyword>
<comment type="function">
    <text evidence="1">Necessary for efficient RNA polymerase transcription elongation past template-encoded arresting sites. The arresting sites in DNA have the property of trapping a certain fraction of elongating RNA polymerases that pass through, resulting in locked ternary complexes. Cleavage of the nascent transcript by cleavage factors such as GreA or GreB allows the resumption of elongation from the new 3'terminus. GreA releases sequences of 2 to 3 nucleotides.</text>
</comment>
<comment type="similarity">
    <text evidence="1">Belongs to the GreA/GreB family.</text>
</comment>
<feature type="chain" id="PRO_1000094176" description="Transcription elongation factor GreA">
    <location>
        <begin position="1"/>
        <end position="158"/>
    </location>
</feature>
<name>GREA_METS4</name>
<proteinExistence type="inferred from homology"/>